<comment type="similarity">
    <text evidence="1">To phage lambda packaging protein FI.</text>
</comment>
<accession>P36276</accession>
<reference key="1">
    <citation type="journal article" date="1993" name="Gene">
        <title>Sequence analysis of the phage 21 genes for prohead assembly and head completion.</title>
        <authorList>
            <person name="Smith M.P."/>
            <person name="Feiss M."/>
        </authorList>
    </citation>
    <scope>NUCLEOTIDE SEQUENCE [GENOMIC DNA]</scope>
</reference>
<reference key="2">
    <citation type="journal article" date="1993" name="J. Bacteriol.">
        <title>Sites and gene products involved in lambdoid phage DNA packaging.</title>
        <authorList>
            <person name="Smith M.P."/>
            <person name="Feiss M."/>
        </authorList>
    </citation>
    <scope>NUCLEOTIDE SEQUENCE [GENOMIC DNA]</scope>
</reference>
<proteinExistence type="predicted"/>
<organism>
    <name type="scientific">Enterobacteria phage P21</name>
    <name type="common">Bacteriophage 21</name>
    <name type="synonym">Bacteriophage P21</name>
    <dbReference type="NCBI Taxonomy" id="10711"/>
    <lineage>
        <taxon>Viruses</taxon>
        <taxon>Duplodnaviria</taxon>
        <taxon>Heunggongvirae</taxon>
        <taxon>Uroviricota</taxon>
        <taxon>Caudoviricetes</taxon>
        <taxon>Lambdavirus</taxon>
        <taxon>Lambdavirus lambda</taxon>
    </lineage>
</organism>
<feature type="chain" id="PRO_0000077797" description="Uncharacterized 13.5 kDa protein in GP7-GP8 intergenic region">
    <location>
        <begin position="1"/>
        <end position="124"/>
    </location>
</feature>
<name>YG78_BPP21</name>
<sequence>MATKEQNLKRLDELALILGREPDISGSAAEIAQRVAEWEEEMQSSGDDVQVMNMDIRERETAAHDVREETSGALTRIRVLTCLHLCGVDGETGESVELADVGRVILIMSSDAKTHVDGGMAVYA</sequence>
<evidence type="ECO:0000305" key="1"/>
<organismHost>
    <name type="scientific">Escherichia coli</name>
    <dbReference type="NCBI Taxonomy" id="562"/>
</organismHost>
<dbReference type="EMBL" id="M81255">
    <property type="protein sequence ID" value="AAA32347.1"/>
    <property type="molecule type" value="Genomic_DNA"/>
</dbReference>
<dbReference type="SMR" id="P36276"/>
<dbReference type="InterPro" id="IPR025147">
    <property type="entry name" value="Packaging_FI"/>
</dbReference>
<dbReference type="Pfam" id="PF14000">
    <property type="entry name" value="Packaging_FI"/>
    <property type="match status" value="1"/>
</dbReference>
<protein>
    <recommendedName>
        <fullName>Uncharacterized 13.5 kDa protein in GP7-GP8 intergenic region</fullName>
    </recommendedName>
</protein>